<protein>
    <recommendedName>
        <fullName>DELLA protein RGL1</fullName>
    </recommendedName>
    <alternativeName>
        <fullName>GRAS family protein 9</fullName>
        <shortName>AtGRAS-9</shortName>
    </alternativeName>
    <alternativeName>
        <fullName>RGA-like protein 1</fullName>
        <shortName>RGA-like protein</shortName>
    </alternativeName>
</protein>
<reference key="1">
    <citation type="journal article" date="1998" name="J. Exp. Bot.">
        <title>Cloning of a novel Arabidopsis thaliana RGA-like gene, a putative member of the VHIID domain transcription factor family.</title>
        <authorList>
            <person name="Sanchez-Fernandez R."/>
            <person name="Ardiles-Diaz W."/>
            <person name="Van Montagu M."/>
            <person name="Inze D."/>
            <person name="May M.J."/>
        </authorList>
    </citation>
    <scope>NUCLEOTIDE SEQUENCE [GENOMIC DNA]</scope>
</reference>
<reference key="2">
    <citation type="journal article" date="2002" name="Plant Cell">
        <title>Arabidopsis RGL1 encodes a negative regulator of gibberellin responses.</title>
        <authorList>
            <person name="Wen C.-K."/>
            <person name="Chang C."/>
        </authorList>
    </citation>
    <scope>NUCLEOTIDE SEQUENCE [MRNA]</scope>
    <scope>FUNCTION</scope>
    <scope>SUBCELLULAR LOCATION</scope>
    <scope>LACK OF DEGRADATION</scope>
    <scope>TISSUE SPECIFICITY</scope>
    <source>
        <tissue>Seedling</tissue>
    </source>
</reference>
<reference key="3">
    <citation type="journal article" date="2000" name="Nature">
        <title>Sequence and analysis of chromosome 1 of the plant Arabidopsis thaliana.</title>
        <authorList>
            <person name="Theologis A."/>
            <person name="Ecker J.R."/>
            <person name="Palm C.J."/>
            <person name="Federspiel N.A."/>
            <person name="Kaul S."/>
            <person name="White O."/>
            <person name="Alonso J."/>
            <person name="Altafi H."/>
            <person name="Araujo R."/>
            <person name="Bowman C.L."/>
            <person name="Brooks S.Y."/>
            <person name="Buehler E."/>
            <person name="Chan A."/>
            <person name="Chao Q."/>
            <person name="Chen H."/>
            <person name="Cheuk R.F."/>
            <person name="Chin C.W."/>
            <person name="Chung M.K."/>
            <person name="Conn L."/>
            <person name="Conway A.B."/>
            <person name="Conway A.R."/>
            <person name="Creasy T.H."/>
            <person name="Dewar K."/>
            <person name="Dunn P."/>
            <person name="Etgu P."/>
            <person name="Feldblyum T.V."/>
            <person name="Feng J.-D."/>
            <person name="Fong B."/>
            <person name="Fujii C.Y."/>
            <person name="Gill J.E."/>
            <person name="Goldsmith A.D."/>
            <person name="Haas B."/>
            <person name="Hansen N.F."/>
            <person name="Hughes B."/>
            <person name="Huizar L."/>
            <person name="Hunter J.L."/>
            <person name="Jenkins J."/>
            <person name="Johnson-Hopson C."/>
            <person name="Khan S."/>
            <person name="Khaykin E."/>
            <person name="Kim C.J."/>
            <person name="Koo H.L."/>
            <person name="Kremenetskaia I."/>
            <person name="Kurtz D.B."/>
            <person name="Kwan A."/>
            <person name="Lam B."/>
            <person name="Langin-Hooper S."/>
            <person name="Lee A."/>
            <person name="Lee J.M."/>
            <person name="Lenz C.A."/>
            <person name="Li J.H."/>
            <person name="Li Y.-P."/>
            <person name="Lin X."/>
            <person name="Liu S.X."/>
            <person name="Liu Z.A."/>
            <person name="Luros J.S."/>
            <person name="Maiti R."/>
            <person name="Marziali A."/>
            <person name="Militscher J."/>
            <person name="Miranda M."/>
            <person name="Nguyen M."/>
            <person name="Nierman W.C."/>
            <person name="Osborne B.I."/>
            <person name="Pai G."/>
            <person name="Peterson J."/>
            <person name="Pham P.K."/>
            <person name="Rizzo M."/>
            <person name="Rooney T."/>
            <person name="Rowley D."/>
            <person name="Sakano H."/>
            <person name="Salzberg S.L."/>
            <person name="Schwartz J.R."/>
            <person name="Shinn P."/>
            <person name="Southwick A.M."/>
            <person name="Sun H."/>
            <person name="Tallon L.J."/>
            <person name="Tambunga G."/>
            <person name="Toriumi M.J."/>
            <person name="Town C.D."/>
            <person name="Utterback T."/>
            <person name="Van Aken S."/>
            <person name="Vaysberg M."/>
            <person name="Vysotskaia V.S."/>
            <person name="Walker M."/>
            <person name="Wu D."/>
            <person name="Yu G."/>
            <person name="Fraser C.M."/>
            <person name="Venter J.C."/>
            <person name="Davis R.W."/>
        </authorList>
    </citation>
    <scope>NUCLEOTIDE SEQUENCE [LARGE SCALE GENOMIC DNA]</scope>
    <source>
        <strain>cv. Columbia</strain>
    </source>
</reference>
<reference key="4">
    <citation type="journal article" date="2017" name="Plant J.">
        <title>Araport11: a complete reannotation of the Arabidopsis thaliana reference genome.</title>
        <authorList>
            <person name="Cheng C.Y."/>
            <person name="Krishnakumar V."/>
            <person name="Chan A.P."/>
            <person name="Thibaud-Nissen F."/>
            <person name="Schobel S."/>
            <person name="Town C.D."/>
        </authorList>
    </citation>
    <scope>GENOME REANNOTATION</scope>
    <source>
        <strain>cv. Columbia</strain>
    </source>
</reference>
<reference key="5">
    <citation type="journal article" date="2003" name="Science">
        <title>Empirical analysis of transcriptional activity in the Arabidopsis genome.</title>
        <authorList>
            <person name="Yamada K."/>
            <person name="Lim J."/>
            <person name="Dale J.M."/>
            <person name="Chen H."/>
            <person name="Shinn P."/>
            <person name="Palm C.J."/>
            <person name="Southwick A.M."/>
            <person name="Wu H.C."/>
            <person name="Kim C.J."/>
            <person name="Nguyen M."/>
            <person name="Pham P.K."/>
            <person name="Cheuk R.F."/>
            <person name="Karlin-Newmann G."/>
            <person name="Liu S.X."/>
            <person name="Lam B."/>
            <person name="Sakano H."/>
            <person name="Wu T."/>
            <person name="Yu G."/>
            <person name="Miranda M."/>
            <person name="Quach H.L."/>
            <person name="Tripp M."/>
            <person name="Chang C.H."/>
            <person name="Lee J.M."/>
            <person name="Toriumi M.J."/>
            <person name="Chan M.M."/>
            <person name="Tang C.C."/>
            <person name="Onodera C.S."/>
            <person name="Deng J.M."/>
            <person name="Akiyama K."/>
            <person name="Ansari Y."/>
            <person name="Arakawa T."/>
            <person name="Banh J."/>
            <person name="Banno F."/>
            <person name="Bowser L."/>
            <person name="Brooks S.Y."/>
            <person name="Carninci P."/>
            <person name="Chao Q."/>
            <person name="Choy N."/>
            <person name="Enju A."/>
            <person name="Goldsmith A.D."/>
            <person name="Gurjal M."/>
            <person name="Hansen N.F."/>
            <person name="Hayashizaki Y."/>
            <person name="Johnson-Hopson C."/>
            <person name="Hsuan V.W."/>
            <person name="Iida K."/>
            <person name="Karnes M."/>
            <person name="Khan S."/>
            <person name="Koesema E."/>
            <person name="Ishida J."/>
            <person name="Jiang P.X."/>
            <person name="Jones T."/>
            <person name="Kawai J."/>
            <person name="Kamiya A."/>
            <person name="Meyers C."/>
            <person name="Nakajima M."/>
            <person name="Narusaka M."/>
            <person name="Seki M."/>
            <person name="Sakurai T."/>
            <person name="Satou M."/>
            <person name="Tamse R."/>
            <person name="Vaysberg M."/>
            <person name="Wallender E.K."/>
            <person name="Wong C."/>
            <person name="Yamamura Y."/>
            <person name="Yuan S."/>
            <person name="Shinozaki K."/>
            <person name="Davis R.W."/>
            <person name="Theologis A."/>
            <person name="Ecker J.R."/>
        </authorList>
    </citation>
    <scope>NUCLEOTIDE SEQUENCE [LARGE SCALE MRNA]</scope>
    <source>
        <strain>cv. Columbia</strain>
    </source>
</reference>
<reference key="6">
    <citation type="journal article" date="1999" name="Plant J.">
        <title>The GRAS gene family in Arabidopsis: sequence characterization and basic expression analysis of the SCARECROW-LIKE genes.</title>
        <authorList>
            <person name="Pysh L.D."/>
            <person name="Wysocka-Diller J.W."/>
            <person name="Camilleri C."/>
            <person name="Bouchez D."/>
            <person name="Benfey P.N."/>
        </authorList>
    </citation>
    <scope>IDENTIFICATION</scope>
</reference>
<reference key="7">
    <citation type="journal article" date="2002" name="Genes Dev.">
        <title>Gibberellin regulates Arabidopsis seed germination via RGL2, a GAI/RGA-like gene whose expression is up-regulated following imbibition.</title>
        <authorList>
            <person name="Lee S."/>
            <person name="Cheng H."/>
            <person name="King K.E."/>
            <person name="Wang W."/>
            <person name="He Y."/>
            <person name="Hussain A."/>
            <person name="Lo J."/>
            <person name="Harberd N.P."/>
            <person name="Peng J."/>
        </authorList>
    </citation>
    <scope>FUNCTION</scope>
</reference>
<reference key="8">
    <citation type="journal article" date="2003" name="Nature">
        <title>Auxin promotes Arabidopsis root growth by modulating gibberellin response.</title>
        <authorList>
            <person name="Fu X."/>
            <person name="Harberd N.P."/>
        </authorList>
    </citation>
    <scope>FUNCTION</scope>
</reference>
<reference key="9">
    <citation type="journal article" date="2003" name="Plant Cell">
        <title>Ethylene regulates Arabidopsis development via the modulation of DELLA protein growth repressor function.</title>
        <authorList>
            <person name="Achard P."/>
            <person name="Vriezen W.H."/>
            <person name="Van Der Straeten D."/>
            <person name="Harberd N.P."/>
        </authorList>
    </citation>
    <scope>FUNCTION</scope>
</reference>
<reference key="10">
    <citation type="journal article" date="2004" name="Development">
        <title>Gibberellin regulates Arabidopsis floral development via suppression of DELLA protein function.</title>
        <authorList>
            <person name="Cheng H."/>
            <person name="Qin L."/>
            <person name="Lee S."/>
            <person name="Fu X."/>
            <person name="Richards D.E."/>
            <person name="Cao D."/>
            <person name="Luo D."/>
            <person name="Harberd N.P."/>
            <person name="Peng J."/>
        </authorList>
    </citation>
    <scope>FUNCTION</scope>
</reference>
<reference key="11">
    <citation type="journal article" date="2004" name="Plant Physiol.">
        <title>Della proteins and gibberellin-regulated seed germination and floral development in Arabidopsis.</title>
        <authorList>
            <person name="Tyler L."/>
            <person name="Thomas S.G."/>
            <person name="Hu J."/>
            <person name="Dill A."/>
            <person name="Alonso J.M."/>
            <person name="Ecker J.R."/>
            <person name="Sun T.-P."/>
        </authorList>
    </citation>
    <scope>INTERACTION WITH GID2</scope>
</reference>
<reference key="12">
    <citation type="journal article" date="2004" name="Proc. Natl. Acad. Sci. U.S.A.">
        <title>Floral homeotic genes are targets of gibberellin signaling in flower development.</title>
        <authorList>
            <person name="Yu H."/>
            <person name="Ito T."/>
            <person name="Zhao Y."/>
            <person name="Peng J."/>
            <person name="Kumar P."/>
            <person name="Meyerowitz E.M."/>
        </authorList>
    </citation>
    <scope>FUNCTION</scope>
</reference>
<reference key="13">
    <citation type="journal article" date="2005" name="Planta">
        <title>Loss of function of four DELLA genes leads to light- and gibberellin-independent seed germination in Arabidopsis.</title>
        <authorList>
            <person name="Cao D."/>
            <person name="Hussain A."/>
            <person name="Cheng H."/>
            <person name="Peng J."/>
        </authorList>
    </citation>
    <scope>FUNCTION</scope>
</reference>
<reference key="14">
    <citation type="journal article" date="2006" name="Plant J.">
        <title>Identification and characterization of Arabidopsis gibberellin receptors.</title>
        <authorList>
            <person name="Nakajima M."/>
            <person name="Shimada A."/>
            <person name="Takashi Y."/>
            <person name="Kim Y.C."/>
            <person name="Park S.H."/>
            <person name="Ueguchi-Tanaka M."/>
            <person name="Suzuki H."/>
            <person name="Katoh E."/>
            <person name="Iuchi S."/>
            <person name="Kobayashi M."/>
            <person name="Maeda T."/>
            <person name="Matsuoka M."/>
            <person name="Yamaguchi I."/>
        </authorList>
    </citation>
    <scope>INTERACTION WITH GID1A; GID1B AND GID1C</scope>
</reference>
<reference key="15">
    <citation type="journal article" date="2013" name="Plant Cell">
        <title>DELLA proteins and their interacting RING Finger proteins repress gibberellin responses by binding to the promoters of a subset of gibberellin-responsive genes in Arabidopsis.</title>
        <authorList>
            <person name="Park J."/>
            <person name="Nguyen K.T."/>
            <person name="Park E."/>
            <person name="Jeon J.S."/>
            <person name="Choi G."/>
        </authorList>
    </citation>
    <scope>INTERACTION WITH BOI; BRG1; BRG2 AND BRG3</scope>
    <scope>DISRUPTION PHENOTYPE</scope>
</reference>
<reference key="16">
    <citation type="journal article" date="2014" name="Plant Cell">
        <title>DELLAs function as coactivators of GAI-ASSOCIATED FACTOR1 in regulation of gibberellin homeostasis and signaling in Arabidopsis.</title>
        <authorList>
            <person name="Fukazawa J."/>
            <person name="Teramura H."/>
            <person name="Murakoshi S."/>
            <person name="Nasuno K."/>
            <person name="Nishida N."/>
            <person name="Ito T."/>
            <person name="Yoshida M."/>
            <person name="Kamiya Y."/>
            <person name="Yamaguchi S."/>
            <person name="Takahashi Y."/>
        </authorList>
    </citation>
    <scope>INTERACTION WITH GAF1/IDD2 AND ENY/IDD1</scope>
    <source>
        <strain>cv. Columbia</strain>
    </source>
</reference>
<gene>
    <name type="primary">RGL1</name>
    <name type="synonym">RGAL</name>
    <name type="ordered locus">At1g66350</name>
    <name type="ORF">T27F4.10</name>
</gene>
<comment type="function">
    <text evidence="4 5 6 7 8 9 11">Probable transcriptional regulator that acts as a repressor of the gibberellin (GA) signaling pathway. No effect of the BOI proteins on its stability. Probably acts by participating in large multiprotein complexes that repress transcription of GA-inducible genes. Has overlapping but distinct roles in GA signaling compared to RGA and GAI. Regulates the floral development. May also participate in seed germination and in ovule and anther development. Its activity is probably regulated by other phytohormones such as auxin and ethylene.</text>
</comment>
<comment type="subunit">
    <text evidence="10 12 13 14">Interacts directly with the GID2/SLY1 component of the SCF(GID2) complex. Interacts (via N-terminus) with GID1A, GID1B and GID1B (via N-terminus). Interacts with the BOI proteins BOI, BRG1, BRG2 and BRG3. Binds to and coactivates GAF1/IDD2 and ENY/IDD1 (PubMed:25035403).</text>
</comment>
<comment type="interaction">
    <interactant intactId="EBI-963647">
        <id>Q9C8Y3</id>
    </interactant>
    <interactant intactId="EBI-1803261">
        <id>Q8S307</id>
        <label>BZR1</label>
    </interactant>
    <organismsDiffer>false</organismsDiffer>
    <experiments>3</experiments>
</comment>
<comment type="interaction">
    <interactant intactId="EBI-963647">
        <id>Q9C8Y3</id>
    </interactant>
    <interactant intactId="EBI-963597">
        <id>Q9MAA7</id>
        <label>GID1A</label>
    </interactant>
    <organismsDiffer>false</organismsDiffer>
    <experiments>7</experiments>
</comment>
<comment type="interaction">
    <interactant intactId="EBI-963647">
        <id>Q9C8Y3</id>
    </interactant>
    <interactant intactId="EBI-963686">
        <id>Q9LYC1</id>
        <label>GID1B</label>
    </interactant>
    <organismsDiffer>false</organismsDiffer>
    <experiments>6</experiments>
</comment>
<comment type="interaction">
    <interactant intactId="EBI-963647">
        <id>Q9C8Y3</id>
    </interactant>
    <interactant intactId="EBI-963794">
        <id>Q940G6</id>
        <label>GID1C</label>
    </interactant>
    <organismsDiffer>false</organismsDiffer>
    <experiments>6</experiments>
</comment>
<comment type="interaction">
    <interactant intactId="EBI-963647">
        <id>Q9C8Y3</id>
    </interactant>
    <interactant intactId="EBI-2367923">
        <id>Q38829</id>
        <label>IAA11</label>
    </interactant>
    <organismsDiffer>false</organismsDiffer>
    <experiments>3</experiments>
</comment>
<comment type="interaction">
    <interactant intactId="EBI-963647">
        <id>Q9C8Y3</id>
    </interactant>
    <interactant intactId="EBI-632231">
        <id>O24407</id>
        <label>IAA16</label>
    </interactant>
    <organismsDiffer>false</organismsDiffer>
    <experiments>3</experiments>
</comment>
<comment type="interaction">
    <interactant intactId="EBI-963647">
        <id>Q9C8Y3</id>
    </interactant>
    <interactant intactId="EBI-632243">
        <id>P93830</id>
        <label>IAA17</label>
    </interactant>
    <organismsDiffer>false</organismsDiffer>
    <experiments>3</experiments>
</comment>
<comment type="interaction">
    <interactant intactId="EBI-963647">
        <id>Q9C8Y3</id>
    </interactant>
    <interactant intactId="EBI-632343">
        <id>P49678</id>
        <label>IAA2</label>
    </interactant>
    <organismsDiffer>false</organismsDiffer>
    <experiments>3</experiments>
</comment>
<comment type="interaction">
    <interactant intactId="EBI-963647">
        <id>Q9C8Y3</id>
    </interactant>
    <interactant intactId="EBI-307174">
        <id>Q38822</id>
        <label>IAA3</label>
    </interactant>
    <organismsDiffer>false</organismsDiffer>
    <experiments>3</experiments>
</comment>
<comment type="interaction">
    <interactant intactId="EBI-963647">
        <id>Q9C8Y3</id>
    </interactant>
    <interactant intactId="EBI-632187">
        <id>P33077</id>
        <label>IAA4</label>
    </interactant>
    <organismsDiffer>false</organismsDiffer>
    <experiments>3</experiments>
</comment>
<comment type="interaction">
    <interactant intactId="EBI-963647">
        <id>Q9C8Y3</id>
    </interactant>
    <interactant intactId="EBI-602959">
        <id>Q38825</id>
        <label>IAA7</label>
    </interactant>
    <organismsDiffer>false</organismsDiffer>
    <experiments>3</experiments>
</comment>
<comment type="interaction">
    <interactant intactId="EBI-963647">
        <id>Q9C8Y3</id>
    </interactant>
    <interactant intactId="EBI-632200">
        <id>Q38826</id>
        <label>IAA8</label>
    </interactant>
    <organismsDiffer>false</organismsDiffer>
    <experiments>3</experiments>
</comment>
<comment type="interaction">
    <interactant intactId="EBI-963647">
        <id>Q9C8Y3</id>
    </interactant>
    <interactant intactId="EBI-3387563">
        <id>O48847</id>
        <label>LUH</label>
    </interactant>
    <organismsDiffer>false</organismsDiffer>
    <experiments>3</experiments>
</comment>
<comment type="interaction">
    <interactant intactId="EBI-963647">
        <id>Q9C8Y3</id>
    </interactant>
    <interactant intactId="EBI-4476686">
        <id>Q9ZP59</id>
        <label>TULP1</label>
    </interactant>
    <organismsDiffer>false</organismsDiffer>
    <experiments>3</experiments>
</comment>
<comment type="subcellular location">
    <subcellularLocation>
        <location evidence="4">Nucleus</location>
    </subcellularLocation>
</comment>
<comment type="tissue specificity">
    <text evidence="4">Predominantly expressed in germinating seeds and flowers and siliques. Highly expressed in inflorescences and weakly or not expressed in rosette leaves, etiolated seedlings, siliques, mature stems and roots. RGA and GAI transcripts were detected at slightly varying levels in all tissues examined. RGL2 signal was undetected, and RGL3 signal was very weak in all tissues examined (rosette leaves, seedlings, inflorescences, and siliques) except inflorescences. In the flower, it is expressed in developing ovules as well as in developing anthers throughout microspore development.</text>
</comment>
<comment type="induction">
    <text>Not up-regulated upon GA treatment.</text>
</comment>
<comment type="PTM">
    <text evidence="1">Phosphorylated.</text>
</comment>
<comment type="PTM">
    <text>May be ubiquitinated, as suggested by its interaction with GID2. Ubiquitination is however unsure since in contrast to other DELLA proteins, it is not ubiquitinated and degraded upon GA application. Nevertheless, ubiquitination may be triggered by other processes.</text>
</comment>
<comment type="disruption phenotype">
    <text evidence="13">Rga, gai, rgl1, rgl2 and rgl3 pentuple mutant displays constitutive GA responses even in the absence of GA treatment.</text>
</comment>
<comment type="similarity">
    <text evidence="15">Belongs to the GRAS family. DELLA subfamily.</text>
</comment>
<comment type="caution">
    <text evidence="15">According to PubMed:11877383, it is not involved in seed germination.</text>
</comment>
<comment type="sequence caution" evidence="15">
    <conflict type="erroneous gene model prediction">
        <sequence resource="EMBL-CDS" id="CAA12242"/>
    </conflict>
</comment>
<proteinExistence type="evidence at protein level"/>
<keyword id="KW-0217">Developmental protein</keyword>
<keyword id="KW-0221">Differentiation</keyword>
<keyword id="KW-0287">Flowering</keyword>
<keyword id="KW-0939">Gibberellin signaling pathway</keyword>
<keyword id="KW-0539">Nucleus</keyword>
<keyword id="KW-0597">Phosphoprotein</keyword>
<keyword id="KW-1185">Reference proteome</keyword>
<keyword id="KW-0678">Repressor</keyword>
<keyword id="KW-0804">Transcription</keyword>
<keyword id="KW-0805">Transcription regulation</keyword>
<keyword id="KW-0832">Ubl conjugation</keyword>
<feature type="chain" id="PRO_0000132236" description="DELLA protein RGL1">
    <location>
        <begin position="1"/>
        <end position="511"/>
    </location>
</feature>
<feature type="domain" description="GRAS" evidence="2">
    <location>
        <begin position="143"/>
        <end position="506"/>
    </location>
</feature>
<feature type="region of interest" description="Disordered" evidence="3">
    <location>
        <begin position="1"/>
        <end position="20"/>
    </location>
</feature>
<feature type="region of interest" description="Leucine repeat I (LRI)" evidence="2">
    <location>
        <begin position="150"/>
        <end position="204"/>
    </location>
</feature>
<feature type="region of interest" description="VHIID" evidence="2">
    <location>
        <begin position="223"/>
        <end position="288"/>
    </location>
</feature>
<feature type="region of interest" description="Leucine repeat II (LRII)" evidence="2">
    <location>
        <begin position="298"/>
        <end position="330"/>
    </location>
</feature>
<feature type="region of interest" description="PFYRE" evidence="2">
    <location>
        <begin position="341"/>
        <end position="427"/>
    </location>
</feature>
<feature type="region of interest" description="SAW" evidence="2">
    <location>
        <begin position="430"/>
        <end position="506"/>
    </location>
</feature>
<feature type="short sequence motif" description="DELLA motif">
    <location>
        <begin position="32"/>
        <end position="36"/>
    </location>
</feature>
<feature type="short sequence motif" description="LEXLE motif">
    <location>
        <begin position="54"/>
        <end position="58"/>
    </location>
</feature>
<feature type="short sequence motif" description="VHYNP motif">
    <location>
        <begin position="73"/>
        <end position="77"/>
    </location>
</feature>
<feature type="short sequence motif" description="LxCxE motif" evidence="2">
    <location>
        <begin position="157"/>
        <end position="161"/>
    </location>
</feature>
<feature type="short sequence motif" description="VHIID" evidence="2">
    <location>
        <begin position="254"/>
        <end position="258"/>
    </location>
</feature>
<feature type="short sequence motif" description="LXXLL motif" evidence="2">
    <location>
        <begin position="349"/>
        <end position="353"/>
    </location>
</feature>
<feature type="compositionally biased region" description="Basic and acidic residues" evidence="3">
    <location>
        <begin position="1"/>
        <end position="11"/>
    </location>
</feature>
<feature type="sequence conflict" description="In Ref. 1; CAA12242." evidence="15" ref="1">
    <original>R</original>
    <variation>E</variation>
    <location>
        <position position="129"/>
    </location>
</feature>
<feature type="sequence conflict" description="In Ref. 1; CAA12242." evidence="15" ref="1">
    <original>L</original>
    <variation>S</variation>
    <location>
        <position position="215"/>
    </location>
</feature>
<organism>
    <name type="scientific">Arabidopsis thaliana</name>
    <name type="common">Mouse-ear cress</name>
    <dbReference type="NCBI Taxonomy" id="3702"/>
    <lineage>
        <taxon>Eukaryota</taxon>
        <taxon>Viridiplantae</taxon>
        <taxon>Streptophyta</taxon>
        <taxon>Embryophyta</taxon>
        <taxon>Tracheophyta</taxon>
        <taxon>Spermatophyta</taxon>
        <taxon>Magnoliopsida</taxon>
        <taxon>eudicotyledons</taxon>
        <taxon>Gunneridae</taxon>
        <taxon>Pentapetalae</taxon>
        <taxon>rosids</taxon>
        <taxon>malvids</taxon>
        <taxon>Brassicales</taxon>
        <taxon>Brassicaceae</taxon>
        <taxon>Camelineae</taxon>
        <taxon>Arabidopsis</taxon>
    </lineage>
</organism>
<accession>Q9C8Y3</accession>
<accession>O65367</accession>
<sequence>MKREHNHRESSAGEGGSSSMTTVIKEEAAGVDELLVVLGYKVRSSDMADVAHKLEQLEMVLGDGISNLSDETVHYNPSDLSGWVESMLSDLDPTRIQEKPDSEYDLRAIPGSAVYPRDEHVTRRSKRTRIESELSSTRSVVVLDSQETGVRLVHALLACAEAVQQNNLKLADALVKHVGLLASSQAGAMRKVATYFAEGLARRIYRIYPRDDVALSSFSDTLQIHFYESCPYLKFAHFTANQAILEVFATAEKVHVIDLGLNHGLQWPALIQALALRPNGPPDFRLTGIGYSLTDIQEVGWKLGQLASTIGVNFEFKSIALNNLSDLKPEMLDIRPGLESVAVNSVFELHRLLAHPGSIDKFLSTIKSIRPDIMTVVEQEANHNGTVFLDRFTESLHYYSSLFDSLEGPPSQDRVMSELFLGRQILNLVACEGEDRVERHETLNQWRNRFGLGGFKPVSIGSNAYKQASMLLALYAGADGYNVEENEGCLLLGWQTRPLIATSAWRINRVE</sequence>
<name>RGL1_ARATH</name>
<evidence type="ECO:0000250" key="1"/>
<evidence type="ECO:0000255" key="2">
    <source>
        <dbReference type="PROSITE-ProRule" id="PRU01191"/>
    </source>
</evidence>
<evidence type="ECO:0000256" key="3">
    <source>
        <dbReference type="SAM" id="MobiDB-lite"/>
    </source>
</evidence>
<evidence type="ECO:0000269" key="4">
    <source>
    </source>
</evidence>
<evidence type="ECO:0000269" key="5">
    <source>
    </source>
</evidence>
<evidence type="ECO:0000269" key="6">
    <source>
    </source>
</evidence>
<evidence type="ECO:0000269" key="7">
    <source>
    </source>
</evidence>
<evidence type="ECO:0000269" key="8">
    <source>
    </source>
</evidence>
<evidence type="ECO:0000269" key="9">
    <source>
    </source>
</evidence>
<evidence type="ECO:0000269" key="10">
    <source>
    </source>
</evidence>
<evidence type="ECO:0000269" key="11">
    <source>
    </source>
</evidence>
<evidence type="ECO:0000269" key="12">
    <source>
    </source>
</evidence>
<evidence type="ECO:0000269" key="13">
    <source>
    </source>
</evidence>
<evidence type="ECO:0000269" key="14">
    <source>
    </source>
</evidence>
<evidence type="ECO:0000305" key="15"/>
<dbReference type="EMBL" id="AJ224957">
    <property type="protein sequence ID" value="CAA12242.1"/>
    <property type="status" value="ALT_SEQ"/>
    <property type="molecule type" value="Genomic_DNA"/>
</dbReference>
<dbReference type="EMBL" id="AY048749">
    <property type="protein sequence ID" value="AAL05911.1"/>
    <property type="molecule type" value="mRNA"/>
</dbReference>
<dbReference type="EMBL" id="AC020665">
    <property type="protein sequence ID" value="AAG52171.1"/>
    <property type="molecule type" value="Genomic_DNA"/>
</dbReference>
<dbReference type="EMBL" id="CP002684">
    <property type="protein sequence ID" value="AEE34499.1"/>
    <property type="molecule type" value="Genomic_DNA"/>
</dbReference>
<dbReference type="EMBL" id="AY070035">
    <property type="protein sequence ID" value="AAL49792.1"/>
    <property type="molecule type" value="mRNA"/>
</dbReference>
<dbReference type="EMBL" id="AY096506">
    <property type="protein sequence ID" value="AAM20156.1"/>
    <property type="molecule type" value="mRNA"/>
</dbReference>
<dbReference type="PIR" id="G96688">
    <property type="entry name" value="G96688"/>
</dbReference>
<dbReference type="RefSeq" id="NP_176809.1">
    <property type="nucleotide sequence ID" value="NM_105306.4"/>
</dbReference>
<dbReference type="SMR" id="Q9C8Y3"/>
<dbReference type="BioGRID" id="28174">
    <property type="interactions" value="29"/>
</dbReference>
<dbReference type="DIP" id="DIP-37660N"/>
<dbReference type="FunCoup" id="Q9C8Y3">
    <property type="interactions" value="297"/>
</dbReference>
<dbReference type="IntAct" id="Q9C8Y3">
    <property type="interactions" value="24"/>
</dbReference>
<dbReference type="MINT" id="Q9C8Y3"/>
<dbReference type="STRING" id="3702.Q9C8Y3"/>
<dbReference type="PaxDb" id="3702-AT1G66350.1"/>
<dbReference type="ProteomicsDB" id="236885"/>
<dbReference type="EnsemblPlants" id="AT1G66350.1">
    <property type="protein sequence ID" value="AT1G66350.1"/>
    <property type="gene ID" value="AT1G66350"/>
</dbReference>
<dbReference type="GeneID" id="842953"/>
<dbReference type="Gramene" id="AT1G66350.1">
    <property type="protein sequence ID" value="AT1G66350.1"/>
    <property type="gene ID" value="AT1G66350"/>
</dbReference>
<dbReference type="KEGG" id="ath:AT1G66350"/>
<dbReference type="Araport" id="AT1G66350"/>
<dbReference type="TAIR" id="AT1G66350">
    <property type="gene designation" value="RGL1"/>
</dbReference>
<dbReference type="eggNOG" id="ENOG502QPMG">
    <property type="taxonomic scope" value="Eukaryota"/>
</dbReference>
<dbReference type="HOGENOM" id="CLU_011924_4_0_1"/>
<dbReference type="InParanoid" id="Q9C8Y3"/>
<dbReference type="OMA" id="MKREHNH"/>
<dbReference type="PhylomeDB" id="Q9C8Y3"/>
<dbReference type="PRO" id="PR:Q9C8Y3"/>
<dbReference type="Proteomes" id="UP000006548">
    <property type="component" value="Chromosome 1"/>
</dbReference>
<dbReference type="ExpressionAtlas" id="Q9C8Y3">
    <property type="expression patterns" value="baseline and differential"/>
</dbReference>
<dbReference type="GO" id="GO:0005634">
    <property type="term" value="C:nucleus"/>
    <property type="evidence" value="ECO:0000314"/>
    <property type="project" value="TAIR"/>
</dbReference>
<dbReference type="GO" id="GO:0003700">
    <property type="term" value="F:DNA-binding transcription factor activity"/>
    <property type="evidence" value="ECO:0000250"/>
    <property type="project" value="TAIR"/>
</dbReference>
<dbReference type="GO" id="GO:0030154">
    <property type="term" value="P:cell differentiation"/>
    <property type="evidence" value="ECO:0007669"/>
    <property type="project" value="UniProtKB-KW"/>
</dbReference>
<dbReference type="GO" id="GO:0009908">
    <property type="term" value="P:flower development"/>
    <property type="evidence" value="ECO:0007669"/>
    <property type="project" value="UniProtKB-KW"/>
</dbReference>
<dbReference type="GO" id="GO:0009740">
    <property type="term" value="P:gibberellic acid mediated signaling pathway"/>
    <property type="evidence" value="ECO:0000304"/>
    <property type="project" value="TAIR"/>
</dbReference>
<dbReference type="GO" id="GO:0009938">
    <property type="term" value="P:negative regulation of gibberellic acid mediated signaling pathway"/>
    <property type="evidence" value="ECO:0000315"/>
    <property type="project" value="TAIR"/>
</dbReference>
<dbReference type="GO" id="GO:0009739">
    <property type="term" value="P:response to gibberellin"/>
    <property type="evidence" value="ECO:0000270"/>
    <property type="project" value="TAIR"/>
</dbReference>
<dbReference type="FunFam" id="1.10.10.1290:FF:000001">
    <property type="entry name" value="DELLA protein GAI"/>
    <property type="match status" value="1"/>
</dbReference>
<dbReference type="Gene3D" id="1.10.10.1290">
    <property type="entry name" value="Transcriptional regulator DELLA, N-terminal domain"/>
    <property type="match status" value="1"/>
</dbReference>
<dbReference type="InterPro" id="IPR038088">
    <property type="entry name" value="DELLA_N_sf"/>
</dbReference>
<dbReference type="InterPro" id="IPR021914">
    <property type="entry name" value="TF_DELLA_N"/>
</dbReference>
<dbReference type="InterPro" id="IPR005202">
    <property type="entry name" value="TF_GRAS"/>
</dbReference>
<dbReference type="PANTHER" id="PTHR31636">
    <property type="entry name" value="OSJNBA0084A10.13 PROTEIN-RELATED"/>
    <property type="match status" value="1"/>
</dbReference>
<dbReference type="Pfam" id="PF12041">
    <property type="entry name" value="DELLA"/>
    <property type="match status" value="1"/>
</dbReference>
<dbReference type="Pfam" id="PF03514">
    <property type="entry name" value="GRAS"/>
    <property type="match status" value="1"/>
</dbReference>
<dbReference type="SMART" id="SM01129">
    <property type="entry name" value="DELLA"/>
    <property type="match status" value="1"/>
</dbReference>
<dbReference type="PROSITE" id="PS50985">
    <property type="entry name" value="GRAS"/>
    <property type="match status" value="1"/>
</dbReference>